<sequence length="886" mass="98915">MTTSPSSSADLLPKSWDPGAMESVIYQKWLNSGYFAADPASTKPGYSIVLPPPNVTGSLHMGHALEHTMMDALTRRKRMQGYEVLWQPGMDHAGIATQSVVEKQLAINGKIKEDFGRELFVDKVWDWKRESGGAIAGQMRRLGDGVDWSRDRFTMDDGLSRAVRMIFKRLYDAGLIYRAERLVNWSPVLRTALSDIEVIYDEIEGELISFRYGSLDDDEPHIVVATTRVETMLGDTGIAVHPDDKRYQHLVGTTLPHPFIDRELVIVADEHVDPEFGTGAVKVTPAHDPNDFEIGLRHNLPMPNVMDVKAVIVDTGTEFDGMDRFEARIAVREALAVQGRIVEEKRPYRHSVGHSERSGEVIEPRLSLQWWVRVESLAKAAGDAVRNGDTVIHPASMESRWFAWVDDMRDWCISRQLWWGHRIPIWYGPNGEQVCVGPDETPPEGWQQDPDVLDTWFSSALWPFSTLGWPQMTPELEKFYPTSILVTGYDILFFWVARMMMLGTFVGGDDAITLGGCRGPQVPFTDVFLHGLIRDEFGRKMSKSRGNVIDPLAWMDMFGADALRFTLARGSSPGGDLAIGEDHVRASRNFGTKLFNATRYALLNGAALVPLPALTALTDADRWILGRLEQVRAEVDSAFDGYEFSRACEALYHFAWDEFCDWYLELAKAQLADGLTHTTAVLAAALDTLLRLLHPVMPFITETLWQALTQLESLVIATWPEPSGISLDLVAAQRISDMQKLVTEIRRFRSDQGLVDRQKVPARLSGVEDSDLATQVGFVTSLALLTAASNDFRPSALLEVRLGPNKDRAVVVELDTSGTIDVAAERRRMEKDLAAAQKELASTAAKLANADFLAKAPEAVVVKIRDRQRMAKEETDRIIARLAGLQ</sequence>
<feature type="chain" id="PRO_0000224505" description="Valine--tRNA ligase">
    <location>
        <begin position="1"/>
        <end position="886"/>
    </location>
</feature>
<feature type="coiled-coil region" evidence="1">
    <location>
        <begin position="820"/>
        <end position="851"/>
    </location>
</feature>
<feature type="short sequence motif" description="'HIGH' region">
    <location>
        <begin position="53"/>
        <end position="63"/>
    </location>
</feature>
<feature type="short sequence motif" description="'KMSKS' region">
    <location>
        <begin position="540"/>
        <end position="544"/>
    </location>
</feature>
<feature type="binding site" evidence="1">
    <location>
        <position position="543"/>
    </location>
    <ligand>
        <name>ATP</name>
        <dbReference type="ChEBI" id="CHEBI:30616"/>
    </ligand>
</feature>
<proteinExistence type="inferred from homology"/>
<organism>
    <name type="scientific">Mycobacterium leprae (strain TN)</name>
    <dbReference type="NCBI Taxonomy" id="272631"/>
    <lineage>
        <taxon>Bacteria</taxon>
        <taxon>Bacillati</taxon>
        <taxon>Actinomycetota</taxon>
        <taxon>Actinomycetes</taxon>
        <taxon>Mycobacteriales</taxon>
        <taxon>Mycobacteriaceae</taxon>
        <taxon>Mycobacterium</taxon>
    </lineage>
</organism>
<protein>
    <recommendedName>
        <fullName evidence="1">Valine--tRNA ligase</fullName>
        <ecNumber evidence="1">6.1.1.9</ecNumber>
    </recommendedName>
    <alternativeName>
        <fullName evidence="1">Valyl-tRNA synthetase</fullName>
        <shortName evidence="1">ValRS</shortName>
    </alternativeName>
</protein>
<accession>Q9CBY7</accession>
<reference key="1">
    <citation type="journal article" date="2001" name="Nature">
        <title>Massive gene decay in the leprosy bacillus.</title>
        <authorList>
            <person name="Cole S.T."/>
            <person name="Eiglmeier K."/>
            <person name="Parkhill J."/>
            <person name="James K.D."/>
            <person name="Thomson N.R."/>
            <person name="Wheeler P.R."/>
            <person name="Honore N."/>
            <person name="Garnier T."/>
            <person name="Churcher C.M."/>
            <person name="Harris D.E."/>
            <person name="Mungall K.L."/>
            <person name="Basham D."/>
            <person name="Brown D."/>
            <person name="Chillingworth T."/>
            <person name="Connor R."/>
            <person name="Davies R.M."/>
            <person name="Devlin K."/>
            <person name="Duthoy S."/>
            <person name="Feltwell T."/>
            <person name="Fraser A."/>
            <person name="Hamlin N."/>
            <person name="Holroyd S."/>
            <person name="Hornsby T."/>
            <person name="Jagels K."/>
            <person name="Lacroix C."/>
            <person name="Maclean J."/>
            <person name="Moule S."/>
            <person name="Murphy L.D."/>
            <person name="Oliver K."/>
            <person name="Quail M.A."/>
            <person name="Rajandream M.A."/>
            <person name="Rutherford K.M."/>
            <person name="Rutter S."/>
            <person name="Seeger K."/>
            <person name="Simon S."/>
            <person name="Simmonds M."/>
            <person name="Skelton J."/>
            <person name="Squares R."/>
            <person name="Squares S."/>
            <person name="Stevens K."/>
            <person name="Taylor K."/>
            <person name="Whitehead S."/>
            <person name="Woodward J.R."/>
            <person name="Barrell B.G."/>
        </authorList>
    </citation>
    <scope>NUCLEOTIDE SEQUENCE [LARGE SCALE GENOMIC DNA]</scope>
    <source>
        <strain>TN</strain>
    </source>
</reference>
<evidence type="ECO:0000255" key="1">
    <source>
        <dbReference type="HAMAP-Rule" id="MF_02004"/>
    </source>
</evidence>
<keyword id="KW-0030">Aminoacyl-tRNA synthetase</keyword>
<keyword id="KW-0067">ATP-binding</keyword>
<keyword id="KW-0175">Coiled coil</keyword>
<keyword id="KW-0963">Cytoplasm</keyword>
<keyword id="KW-0436">Ligase</keyword>
<keyword id="KW-0547">Nucleotide-binding</keyword>
<keyword id="KW-0648">Protein biosynthesis</keyword>
<keyword id="KW-1185">Reference proteome</keyword>
<dbReference type="EC" id="6.1.1.9" evidence="1"/>
<dbReference type="EMBL" id="AL583922">
    <property type="protein sequence ID" value="CAC30422.1"/>
    <property type="molecule type" value="Genomic_DNA"/>
</dbReference>
<dbReference type="PIR" id="A87093">
    <property type="entry name" value="A87093"/>
</dbReference>
<dbReference type="RefSeq" id="NP_302037.1">
    <property type="nucleotide sequence ID" value="NC_002677.1"/>
</dbReference>
<dbReference type="RefSeq" id="WP_010908358.1">
    <property type="nucleotide sequence ID" value="NC_002677.1"/>
</dbReference>
<dbReference type="SMR" id="Q9CBY7"/>
<dbReference type="STRING" id="272631.gene:17575310"/>
<dbReference type="KEGG" id="mle:ML1472"/>
<dbReference type="PATRIC" id="fig|272631.5.peg.2748"/>
<dbReference type="Leproma" id="ML1472"/>
<dbReference type="eggNOG" id="COG0525">
    <property type="taxonomic scope" value="Bacteria"/>
</dbReference>
<dbReference type="HOGENOM" id="CLU_001493_0_2_11"/>
<dbReference type="OrthoDB" id="9810365at2"/>
<dbReference type="Proteomes" id="UP000000806">
    <property type="component" value="Chromosome"/>
</dbReference>
<dbReference type="GO" id="GO:0005829">
    <property type="term" value="C:cytosol"/>
    <property type="evidence" value="ECO:0007669"/>
    <property type="project" value="TreeGrafter"/>
</dbReference>
<dbReference type="GO" id="GO:0002161">
    <property type="term" value="F:aminoacyl-tRNA deacylase activity"/>
    <property type="evidence" value="ECO:0007669"/>
    <property type="project" value="InterPro"/>
</dbReference>
<dbReference type="GO" id="GO:0005524">
    <property type="term" value="F:ATP binding"/>
    <property type="evidence" value="ECO:0007669"/>
    <property type="project" value="UniProtKB-UniRule"/>
</dbReference>
<dbReference type="GO" id="GO:0004832">
    <property type="term" value="F:valine-tRNA ligase activity"/>
    <property type="evidence" value="ECO:0007669"/>
    <property type="project" value="UniProtKB-UniRule"/>
</dbReference>
<dbReference type="GO" id="GO:0006438">
    <property type="term" value="P:valyl-tRNA aminoacylation"/>
    <property type="evidence" value="ECO:0007669"/>
    <property type="project" value="UniProtKB-UniRule"/>
</dbReference>
<dbReference type="CDD" id="cd07962">
    <property type="entry name" value="Anticodon_Ia_Val"/>
    <property type="match status" value="1"/>
</dbReference>
<dbReference type="CDD" id="cd00817">
    <property type="entry name" value="ValRS_core"/>
    <property type="match status" value="1"/>
</dbReference>
<dbReference type="FunFam" id="1.10.287.380:FF:000001">
    <property type="entry name" value="Valine--tRNA ligase"/>
    <property type="match status" value="1"/>
</dbReference>
<dbReference type="FunFam" id="1.10.730.10:FF:000027">
    <property type="entry name" value="Valine--tRNA ligase"/>
    <property type="match status" value="1"/>
</dbReference>
<dbReference type="FunFam" id="3.40.50.620:FF:000098">
    <property type="entry name" value="Valine--tRNA ligase"/>
    <property type="match status" value="1"/>
</dbReference>
<dbReference type="FunFam" id="3.40.50.620:FF:000129">
    <property type="entry name" value="Valine--tRNA ligase"/>
    <property type="match status" value="1"/>
</dbReference>
<dbReference type="FunFam" id="3.90.740.10:FF:000005">
    <property type="entry name" value="Valine--tRNA ligase, mitochondrial"/>
    <property type="match status" value="1"/>
</dbReference>
<dbReference type="Gene3D" id="3.40.50.620">
    <property type="entry name" value="HUPs"/>
    <property type="match status" value="2"/>
</dbReference>
<dbReference type="Gene3D" id="1.10.730.10">
    <property type="entry name" value="Isoleucyl-tRNA Synthetase, Domain 1"/>
    <property type="match status" value="1"/>
</dbReference>
<dbReference type="Gene3D" id="1.10.287.380">
    <property type="entry name" value="Valyl-tRNA synthetase, C-terminal domain"/>
    <property type="match status" value="1"/>
</dbReference>
<dbReference type="Gene3D" id="3.90.740.10">
    <property type="entry name" value="Valyl/Leucyl/Isoleucyl-tRNA synthetase, editing domain"/>
    <property type="match status" value="1"/>
</dbReference>
<dbReference type="HAMAP" id="MF_02004">
    <property type="entry name" value="Val_tRNA_synth_type1"/>
    <property type="match status" value="1"/>
</dbReference>
<dbReference type="InterPro" id="IPR001412">
    <property type="entry name" value="aa-tRNA-synth_I_CS"/>
</dbReference>
<dbReference type="InterPro" id="IPR002300">
    <property type="entry name" value="aa-tRNA-synth_Ia"/>
</dbReference>
<dbReference type="InterPro" id="IPR033705">
    <property type="entry name" value="Anticodon_Ia_Val"/>
</dbReference>
<dbReference type="InterPro" id="IPR013155">
    <property type="entry name" value="M/V/L/I-tRNA-synth_anticd-bd"/>
</dbReference>
<dbReference type="InterPro" id="IPR014729">
    <property type="entry name" value="Rossmann-like_a/b/a_fold"/>
</dbReference>
<dbReference type="InterPro" id="IPR010978">
    <property type="entry name" value="tRNA-bd_arm"/>
</dbReference>
<dbReference type="InterPro" id="IPR009080">
    <property type="entry name" value="tRNAsynth_Ia_anticodon-bd"/>
</dbReference>
<dbReference type="InterPro" id="IPR037118">
    <property type="entry name" value="Val-tRNA_synth_C_sf"/>
</dbReference>
<dbReference type="InterPro" id="IPR019499">
    <property type="entry name" value="Val-tRNA_synth_tRNA-bd"/>
</dbReference>
<dbReference type="InterPro" id="IPR009008">
    <property type="entry name" value="Val/Leu/Ile-tRNA-synth_edit"/>
</dbReference>
<dbReference type="InterPro" id="IPR002303">
    <property type="entry name" value="Valyl-tRNA_ligase"/>
</dbReference>
<dbReference type="NCBIfam" id="NF004349">
    <property type="entry name" value="PRK05729.1"/>
    <property type="match status" value="1"/>
</dbReference>
<dbReference type="NCBIfam" id="TIGR00422">
    <property type="entry name" value="valS"/>
    <property type="match status" value="1"/>
</dbReference>
<dbReference type="PANTHER" id="PTHR11946:SF93">
    <property type="entry name" value="VALINE--TRNA LIGASE, CHLOROPLASTIC_MITOCHONDRIAL 2"/>
    <property type="match status" value="1"/>
</dbReference>
<dbReference type="PANTHER" id="PTHR11946">
    <property type="entry name" value="VALYL-TRNA SYNTHETASES"/>
    <property type="match status" value="1"/>
</dbReference>
<dbReference type="Pfam" id="PF08264">
    <property type="entry name" value="Anticodon_1"/>
    <property type="match status" value="1"/>
</dbReference>
<dbReference type="Pfam" id="PF00133">
    <property type="entry name" value="tRNA-synt_1"/>
    <property type="match status" value="2"/>
</dbReference>
<dbReference type="Pfam" id="PF10458">
    <property type="entry name" value="Val_tRNA-synt_C"/>
    <property type="match status" value="1"/>
</dbReference>
<dbReference type="PRINTS" id="PR00986">
    <property type="entry name" value="TRNASYNTHVAL"/>
</dbReference>
<dbReference type="SUPFAM" id="SSF47323">
    <property type="entry name" value="Anticodon-binding domain of a subclass of class I aminoacyl-tRNA synthetases"/>
    <property type="match status" value="1"/>
</dbReference>
<dbReference type="SUPFAM" id="SSF52374">
    <property type="entry name" value="Nucleotidylyl transferase"/>
    <property type="match status" value="1"/>
</dbReference>
<dbReference type="SUPFAM" id="SSF46589">
    <property type="entry name" value="tRNA-binding arm"/>
    <property type="match status" value="1"/>
</dbReference>
<dbReference type="SUPFAM" id="SSF50677">
    <property type="entry name" value="ValRS/IleRS/LeuRS editing domain"/>
    <property type="match status" value="1"/>
</dbReference>
<dbReference type="PROSITE" id="PS00178">
    <property type="entry name" value="AA_TRNA_LIGASE_I"/>
    <property type="match status" value="1"/>
</dbReference>
<name>SYV_MYCLE</name>
<comment type="function">
    <text evidence="1">Catalyzes the attachment of valine to tRNA(Val). As ValRS can inadvertently accommodate and process structurally similar amino acids such as threonine, to avoid such errors, it has a 'posttransfer' editing activity that hydrolyzes mischarged Thr-tRNA(Val) in a tRNA-dependent manner.</text>
</comment>
<comment type="catalytic activity">
    <reaction evidence="1">
        <text>tRNA(Val) + L-valine + ATP = L-valyl-tRNA(Val) + AMP + diphosphate</text>
        <dbReference type="Rhea" id="RHEA:10704"/>
        <dbReference type="Rhea" id="RHEA-COMP:9672"/>
        <dbReference type="Rhea" id="RHEA-COMP:9708"/>
        <dbReference type="ChEBI" id="CHEBI:30616"/>
        <dbReference type="ChEBI" id="CHEBI:33019"/>
        <dbReference type="ChEBI" id="CHEBI:57762"/>
        <dbReference type="ChEBI" id="CHEBI:78442"/>
        <dbReference type="ChEBI" id="CHEBI:78537"/>
        <dbReference type="ChEBI" id="CHEBI:456215"/>
        <dbReference type="EC" id="6.1.1.9"/>
    </reaction>
</comment>
<comment type="subunit">
    <text evidence="1">Monomer.</text>
</comment>
<comment type="subcellular location">
    <subcellularLocation>
        <location evidence="1">Cytoplasm</location>
    </subcellularLocation>
</comment>
<comment type="domain">
    <text evidence="1">ValRS has two distinct active sites: one for aminoacylation and one for editing. The misactivated threonine is translocated from the active site to the editing site.</text>
</comment>
<comment type="domain">
    <text evidence="1">The C-terminal coiled-coil domain is crucial for aminoacylation activity.</text>
</comment>
<comment type="similarity">
    <text evidence="1">Belongs to the class-I aminoacyl-tRNA synthetase family. ValS type 1 subfamily.</text>
</comment>
<gene>
    <name evidence="1" type="primary">valS</name>
    <name type="ordered locus">ML1472</name>
</gene>